<proteinExistence type="inferred from homology"/>
<keyword id="KW-0067">ATP-binding</keyword>
<keyword id="KW-0963">Cytoplasm</keyword>
<keyword id="KW-0227">DNA damage</keyword>
<keyword id="KW-0234">DNA repair</keyword>
<keyword id="KW-0235">DNA replication</keyword>
<keyword id="KW-0238">DNA-binding</keyword>
<keyword id="KW-0547">Nucleotide-binding</keyword>
<keyword id="KW-1185">Reference proteome</keyword>
<keyword id="KW-0742">SOS response</keyword>
<gene>
    <name type="primary">recF</name>
    <name type="ordered locus">MSMEG_0003</name>
    <name type="ordered locus">MSMEI_0005</name>
</gene>
<evidence type="ECO:0000250" key="1"/>
<evidence type="ECO:0000255" key="2"/>
<evidence type="ECO:0000305" key="3"/>
<name>RECF_MYCS2</name>
<reference key="1">
    <citation type="submission" date="2006-10" db="EMBL/GenBank/DDBJ databases">
        <authorList>
            <person name="Fleischmann R.D."/>
            <person name="Dodson R.J."/>
            <person name="Haft D.H."/>
            <person name="Merkel J.S."/>
            <person name="Nelson W.C."/>
            <person name="Fraser C.M."/>
        </authorList>
    </citation>
    <scope>NUCLEOTIDE SEQUENCE [LARGE SCALE GENOMIC DNA]</scope>
    <source>
        <strain>ATCC 700084 / mc(2)155</strain>
    </source>
</reference>
<reference key="2">
    <citation type="journal article" date="2007" name="Genome Biol.">
        <title>Interrupted coding sequences in Mycobacterium smegmatis: authentic mutations or sequencing errors?</title>
        <authorList>
            <person name="Deshayes C."/>
            <person name="Perrodou E."/>
            <person name="Gallien S."/>
            <person name="Euphrasie D."/>
            <person name="Schaeffer C."/>
            <person name="Van-Dorsselaer A."/>
            <person name="Poch O."/>
            <person name="Lecompte O."/>
            <person name="Reyrat J.-M."/>
        </authorList>
    </citation>
    <scope>NUCLEOTIDE SEQUENCE [LARGE SCALE GENOMIC DNA]</scope>
    <source>
        <strain>ATCC 700084 / mc(2)155</strain>
    </source>
</reference>
<reference key="3">
    <citation type="journal article" date="2009" name="Genome Res.">
        <title>Ortho-proteogenomics: multiple proteomes investigation through orthology and a new MS-based protocol.</title>
        <authorList>
            <person name="Gallien S."/>
            <person name="Perrodou E."/>
            <person name="Carapito C."/>
            <person name="Deshayes C."/>
            <person name="Reyrat J.-M."/>
            <person name="Van Dorsselaer A."/>
            <person name="Poch O."/>
            <person name="Schaeffer C."/>
            <person name="Lecompte O."/>
        </authorList>
    </citation>
    <scope>NUCLEOTIDE SEQUENCE [LARGE SCALE GENOMIC DNA]</scope>
    <source>
        <strain>ATCC 700084 / mc(2)155</strain>
    </source>
</reference>
<reference key="4">
    <citation type="journal article" date="1996" name="Antimicrob. Agents Chemother.">
        <title>Sequence analysis, purification, and study of inhibition by 4-quinolones of the DNA gyrase from Mycobacterium smegmatis.</title>
        <authorList>
            <person name="Revel-Viravau V."/>
            <person name="Truong Q.C."/>
            <person name="Moreau N."/>
            <person name="Jarlier V."/>
            <person name="Sougakoff W."/>
        </authorList>
    </citation>
    <scope>NUCLEOTIDE SEQUENCE [GENOMIC DNA] OF 230-384</scope>
</reference>
<organism>
    <name type="scientific">Mycolicibacterium smegmatis (strain ATCC 700084 / mc(2)155)</name>
    <name type="common">Mycobacterium smegmatis</name>
    <dbReference type="NCBI Taxonomy" id="246196"/>
    <lineage>
        <taxon>Bacteria</taxon>
        <taxon>Bacillati</taxon>
        <taxon>Actinomycetota</taxon>
        <taxon>Actinomycetes</taxon>
        <taxon>Mycobacteriales</taxon>
        <taxon>Mycobacteriaceae</taxon>
        <taxon>Mycolicibacterium</taxon>
    </lineage>
</organism>
<accession>A0QND8</accession>
<accession>I7F4B6</accession>
<accession>P50916</accession>
<protein>
    <recommendedName>
        <fullName>DNA replication and repair protein RecF</fullName>
    </recommendedName>
</protein>
<dbReference type="EMBL" id="CP000480">
    <property type="protein sequence ID" value="ABK70100.1"/>
    <property type="molecule type" value="Genomic_DNA"/>
</dbReference>
<dbReference type="EMBL" id="CP001663">
    <property type="protein sequence ID" value="AFP36490.1"/>
    <property type="molecule type" value="Genomic_DNA"/>
</dbReference>
<dbReference type="EMBL" id="X94224">
    <property type="protein sequence ID" value="CAA63915.1"/>
    <property type="molecule type" value="Genomic_DNA"/>
</dbReference>
<dbReference type="RefSeq" id="WP_011726603.1">
    <property type="nucleotide sequence ID" value="NZ_SIJM01000001.1"/>
</dbReference>
<dbReference type="RefSeq" id="YP_884426.1">
    <property type="nucleotide sequence ID" value="NC_008596.1"/>
</dbReference>
<dbReference type="SMR" id="A0QND8"/>
<dbReference type="STRING" id="246196.MSMEG_0003"/>
<dbReference type="PaxDb" id="246196-MSMEI_0005"/>
<dbReference type="GeneID" id="93454930"/>
<dbReference type="KEGG" id="msg:MSMEI_0005"/>
<dbReference type="KEGG" id="msm:MSMEG_0003"/>
<dbReference type="PATRIC" id="fig|246196.19.peg.3"/>
<dbReference type="eggNOG" id="COG1195">
    <property type="taxonomic scope" value="Bacteria"/>
</dbReference>
<dbReference type="OrthoDB" id="9803889at2"/>
<dbReference type="Proteomes" id="UP000000757">
    <property type="component" value="Chromosome"/>
</dbReference>
<dbReference type="Proteomes" id="UP000006158">
    <property type="component" value="Chromosome"/>
</dbReference>
<dbReference type="GO" id="GO:0005737">
    <property type="term" value="C:cytoplasm"/>
    <property type="evidence" value="ECO:0007669"/>
    <property type="project" value="UniProtKB-SubCell"/>
</dbReference>
<dbReference type="GO" id="GO:0005524">
    <property type="term" value="F:ATP binding"/>
    <property type="evidence" value="ECO:0007669"/>
    <property type="project" value="UniProtKB-UniRule"/>
</dbReference>
<dbReference type="GO" id="GO:0003697">
    <property type="term" value="F:single-stranded DNA binding"/>
    <property type="evidence" value="ECO:0007669"/>
    <property type="project" value="UniProtKB-UniRule"/>
</dbReference>
<dbReference type="GO" id="GO:0006260">
    <property type="term" value="P:DNA replication"/>
    <property type="evidence" value="ECO:0007669"/>
    <property type="project" value="UniProtKB-UniRule"/>
</dbReference>
<dbReference type="GO" id="GO:0000731">
    <property type="term" value="P:DNA synthesis involved in DNA repair"/>
    <property type="evidence" value="ECO:0007669"/>
    <property type="project" value="TreeGrafter"/>
</dbReference>
<dbReference type="GO" id="GO:0006302">
    <property type="term" value="P:double-strand break repair"/>
    <property type="evidence" value="ECO:0007669"/>
    <property type="project" value="TreeGrafter"/>
</dbReference>
<dbReference type="GO" id="GO:0009432">
    <property type="term" value="P:SOS response"/>
    <property type="evidence" value="ECO:0007669"/>
    <property type="project" value="UniProtKB-UniRule"/>
</dbReference>
<dbReference type="CDD" id="cd03242">
    <property type="entry name" value="ABC_RecF"/>
    <property type="match status" value="1"/>
</dbReference>
<dbReference type="Gene3D" id="3.40.50.300">
    <property type="entry name" value="P-loop containing nucleotide triphosphate hydrolases"/>
    <property type="match status" value="1"/>
</dbReference>
<dbReference type="Gene3D" id="1.20.1050.90">
    <property type="entry name" value="RecF/RecN/SMC, N-terminal domain"/>
    <property type="match status" value="1"/>
</dbReference>
<dbReference type="HAMAP" id="MF_00365">
    <property type="entry name" value="RecF"/>
    <property type="match status" value="1"/>
</dbReference>
<dbReference type="InterPro" id="IPR001238">
    <property type="entry name" value="DNA-binding_RecF"/>
</dbReference>
<dbReference type="InterPro" id="IPR018078">
    <property type="entry name" value="DNA-binding_RecF_CS"/>
</dbReference>
<dbReference type="InterPro" id="IPR027417">
    <property type="entry name" value="P-loop_NTPase"/>
</dbReference>
<dbReference type="InterPro" id="IPR003395">
    <property type="entry name" value="RecF/RecN/SMC_N"/>
</dbReference>
<dbReference type="InterPro" id="IPR042174">
    <property type="entry name" value="RecF_2"/>
</dbReference>
<dbReference type="NCBIfam" id="TIGR00611">
    <property type="entry name" value="recf"/>
    <property type="match status" value="1"/>
</dbReference>
<dbReference type="PANTHER" id="PTHR32182">
    <property type="entry name" value="DNA REPLICATION AND REPAIR PROTEIN RECF"/>
    <property type="match status" value="1"/>
</dbReference>
<dbReference type="PANTHER" id="PTHR32182:SF0">
    <property type="entry name" value="DNA REPLICATION AND REPAIR PROTEIN RECF"/>
    <property type="match status" value="1"/>
</dbReference>
<dbReference type="Pfam" id="PF02463">
    <property type="entry name" value="SMC_N"/>
    <property type="match status" value="1"/>
</dbReference>
<dbReference type="SUPFAM" id="SSF52540">
    <property type="entry name" value="P-loop containing nucleoside triphosphate hydrolases"/>
    <property type="match status" value="1"/>
</dbReference>
<dbReference type="PROSITE" id="PS00617">
    <property type="entry name" value="RECF_1"/>
    <property type="match status" value="1"/>
</dbReference>
<dbReference type="PROSITE" id="PS00618">
    <property type="entry name" value="RECF_2"/>
    <property type="match status" value="1"/>
</dbReference>
<feature type="chain" id="PRO_0000293601" description="DNA replication and repair protein RecF">
    <location>
        <begin position="1"/>
        <end position="384"/>
    </location>
</feature>
<feature type="binding site" evidence="2">
    <location>
        <begin position="30"/>
        <end position="37"/>
    </location>
    <ligand>
        <name>ATP</name>
        <dbReference type="ChEBI" id="CHEBI:30616"/>
    </ligand>
</feature>
<comment type="function">
    <text evidence="1">The RecF protein is involved in DNA metabolism; it is required for DNA replication and normal SOS inducibility. RecF binds preferentially to single-stranded, linear DNA. It also seems to bind ATP (By similarity).</text>
</comment>
<comment type="subcellular location">
    <subcellularLocation>
        <location evidence="1">Cytoplasm</location>
    </subcellularLocation>
</comment>
<comment type="similarity">
    <text evidence="3">Belongs to the RecF family.</text>
</comment>
<sequence>MFARHLGLTDFRSWARVDLDLEPGRTVFVGPNGFGKTNLVEALWYSATLGSHRVATDAPLIRAGAERAIVSTIVVNEGRELAVDLEITSGRANKARLNRSPVRSAREILGVLRAVLFSPEDLSLVRGDPGDRRRYLDELATTRRPALAGVRADYDKVVRQRTALLKTAAGARYRGDRSVIDTLEVWDGHLAAHGAALVASRVKLVEELQPEVEKAYQLLAPASRPAAIRYRSSVEAIEDAPGPESVEFYEAALLDALARRRDAELERGVCLVGPHRDDLELRLGDQPAKGFASHGESWSMALALRLGAYELLCSDGVEPVLLLDDVFAELDTSRRRALATVAGSAEQVLVTAAVGEDIPEDWDARRVEIRMVEDDGGRVSMVAS</sequence>